<reference key="1">
    <citation type="journal article" date="2006" name="J. Bacteriol.">
        <title>Pathogenomic sequence analysis of Bacillus cereus and Bacillus thuringiensis isolates closely related to Bacillus anthracis.</title>
        <authorList>
            <person name="Han C.S."/>
            <person name="Xie G."/>
            <person name="Challacombe J.F."/>
            <person name="Altherr M.R."/>
            <person name="Bhotika S.S."/>
            <person name="Bruce D."/>
            <person name="Campbell C.S."/>
            <person name="Campbell M.L."/>
            <person name="Chen J."/>
            <person name="Chertkov O."/>
            <person name="Cleland C."/>
            <person name="Dimitrijevic M."/>
            <person name="Doggett N.A."/>
            <person name="Fawcett J.J."/>
            <person name="Glavina T."/>
            <person name="Goodwin L.A."/>
            <person name="Hill K.K."/>
            <person name="Hitchcock P."/>
            <person name="Jackson P.J."/>
            <person name="Keim P."/>
            <person name="Kewalramani A.R."/>
            <person name="Longmire J."/>
            <person name="Lucas S."/>
            <person name="Malfatti S."/>
            <person name="McMurry K."/>
            <person name="Meincke L.J."/>
            <person name="Misra M."/>
            <person name="Moseman B.L."/>
            <person name="Mundt M."/>
            <person name="Munk A.C."/>
            <person name="Okinaka R.T."/>
            <person name="Parson-Quintana B."/>
            <person name="Reilly L.P."/>
            <person name="Richardson P."/>
            <person name="Robinson D.L."/>
            <person name="Rubin E."/>
            <person name="Saunders E."/>
            <person name="Tapia R."/>
            <person name="Tesmer J.G."/>
            <person name="Thayer N."/>
            <person name="Thompson L.S."/>
            <person name="Tice H."/>
            <person name="Ticknor L.O."/>
            <person name="Wills P.L."/>
            <person name="Brettin T.S."/>
            <person name="Gilna P."/>
        </authorList>
    </citation>
    <scope>NUCLEOTIDE SEQUENCE [LARGE SCALE GENOMIC DNA]</scope>
    <source>
        <strain>ZK / E33L</strain>
    </source>
</reference>
<comment type="function">
    <text evidence="1">Modulates RecA activity.</text>
</comment>
<comment type="subcellular location">
    <subcellularLocation>
        <location evidence="1">Cytoplasm</location>
    </subcellularLocation>
</comment>
<comment type="similarity">
    <text evidence="1">Belongs to the RecX family.</text>
</comment>
<protein>
    <recommendedName>
        <fullName evidence="1">Regulatory protein RecX</fullName>
    </recommendedName>
</protein>
<sequence>MAVITKIEVQKRSKERFNIYIDKGQGEEYGFSVNEVILIKHGLQKGLEIDEIALGNILYNEEVQKAYLQAISYLSYQMRTKLEIEDFLRKKEVGQAIISEVVSKLLHDRYINDKEYAILYTRTQSNVNRKGPTVIKRELLNKGVQDLIITHSLQEYPKEKQIENALILIEKKKKSYQKHSFLQMKLKLDEMLVRKGYSRDVIQICLEELKDEKDDEKQQEALHYHGNKYYEKYKKYDGWTFENKMKQALYRKGFSIDEIEIFLQMKREEG</sequence>
<dbReference type="EMBL" id="CP000001">
    <property type="protein sequence ID" value="AAU19813.1"/>
    <property type="molecule type" value="Genomic_DNA"/>
</dbReference>
<dbReference type="RefSeq" id="WP_000268520.1">
    <property type="nucleotide sequence ID" value="NZ_CP009968.1"/>
</dbReference>
<dbReference type="SMR" id="Q63GC6"/>
<dbReference type="GeneID" id="93010567"/>
<dbReference type="KEGG" id="bcz:BCE33L0426"/>
<dbReference type="PATRIC" id="fig|288681.22.peg.5175"/>
<dbReference type="Proteomes" id="UP000002612">
    <property type="component" value="Chromosome"/>
</dbReference>
<dbReference type="GO" id="GO:0005737">
    <property type="term" value="C:cytoplasm"/>
    <property type="evidence" value="ECO:0007669"/>
    <property type="project" value="UniProtKB-SubCell"/>
</dbReference>
<dbReference type="GO" id="GO:0006282">
    <property type="term" value="P:regulation of DNA repair"/>
    <property type="evidence" value="ECO:0007669"/>
    <property type="project" value="UniProtKB-UniRule"/>
</dbReference>
<dbReference type="Gene3D" id="1.10.10.10">
    <property type="entry name" value="Winged helix-like DNA-binding domain superfamily/Winged helix DNA-binding domain"/>
    <property type="match status" value="4"/>
</dbReference>
<dbReference type="HAMAP" id="MF_01114">
    <property type="entry name" value="RecX"/>
    <property type="match status" value="1"/>
</dbReference>
<dbReference type="InterPro" id="IPR053926">
    <property type="entry name" value="RecX_HTH_1st"/>
</dbReference>
<dbReference type="InterPro" id="IPR053924">
    <property type="entry name" value="RecX_HTH_2nd"/>
</dbReference>
<dbReference type="InterPro" id="IPR053925">
    <property type="entry name" value="RecX_HTH_3rd"/>
</dbReference>
<dbReference type="InterPro" id="IPR003783">
    <property type="entry name" value="Regulatory_RecX"/>
</dbReference>
<dbReference type="InterPro" id="IPR036388">
    <property type="entry name" value="WH-like_DNA-bd_sf"/>
</dbReference>
<dbReference type="NCBIfam" id="NF010733">
    <property type="entry name" value="PRK14135.1"/>
    <property type="match status" value="1"/>
</dbReference>
<dbReference type="PANTHER" id="PTHR33602">
    <property type="entry name" value="REGULATORY PROTEIN RECX FAMILY PROTEIN"/>
    <property type="match status" value="1"/>
</dbReference>
<dbReference type="PANTHER" id="PTHR33602:SF1">
    <property type="entry name" value="REGULATORY PROTEIN RECX FAMILY PROTEIN"/>
    <property type="match status" value="1"/>
</dbReference>
<dbReference type="Pfam" id="PF21982">
    <property type="entry name" value="RecX_HTH1"/>
    <property type="match status" value="1"/>
</dbReference>
<dbReference type="Pfam" id="PF02631">
    <property type="entry name" value="RecX_HTH2"/>
    <property type="match status" value="1"/>
</dbReference>
<dbReference type="Pfam" id="PF21981">
    <property type="entry name" value="RecX_HTH3"/>
    <property type="match status" value="2"/>
</dbReference>
<keyword id="KW-0963">Cytoplasm</keyword>
<accession>Q63GC6</accession>
<proteinExistence type="inferred from homology"/>
<gene>
    <name evidence="1" type="primary">recX</name>
    <name type="ordered locus">BCE33L0426</name>
</gene>
<feature type="chain" id="PRO_0000162417" description="Regulatory protein RecX">
    <location>
        <begin position="1"/>
        <end position="270"/>
    </location>
</feature>
<name>RECX_BACCZ</name>
<organism>
    <name type="scientific">Bacillus cereus (strain ZK / E33L)</name>
    <dbReference type="NCBI Taxonomy" id="288681"/>
    <lineage>
        <taxon>Bacteria</taxon>
        <taxon>Bacillati</taxon>
        <taxon>Bacillota</taxon>
        <taxon>Bacilli</taxon>
        <taxon>Bacillales</taxon>
        <taxon>Bacillaceae</taxon>
        <taxon>Bacillus</taxon>
        <taxon>Bacillus cereus group</taxon>
    </lineage>
</organism>
<evidence type="ECO:0000255" key="1">
    <source>
        <dbReference type="HAMAP-Rule" id="MF_01114"/>
    </source>
</evidence>